<accession>Q3BXV3</accession>
<reference key="1">
    <citation type="journal article" date="2005" name="J. Bacteriol.">
        <title>Insights into genome plasticity and pathogenicity of the plant pathogenic Bacterium Xanthomonas campestris pv. vesicatoria revealed by the complete genome sequence.</title>
        <authorList>
            <person name="Thieme F."/>
            <person name="Koebnik R."/>
            <person name="Bekel T."/>
            <person name="Berger C."/>
            <person name="Boch J."/>
            <person name="Buettner D."/>
            <person name="Caldana C."/>
            <person name="Gaigalat L."/>
            <person name="Goesmann A."/>
            <person name="Kay S."/>
            <person name="Kirchner O."/>
            <person name="Lanz C."/>
            <person name="Linke B."/>
            <person name="McHardy A.C."/>
            <person name="Meyer F."/>
            <person name="Mittenhuber G."/>
            <person name="Nies D.H."/>
            <person name="Niesbach-Kloesgen U."/>
            <person name="Patschkowski T."/>
            <person name="Rueckert C."/>
            <person name="Rupp O."/>
            <person name="Schneiker S."/>
            <person name="Schuster S.C."/>
            <person name="Vorhoelter F.J."/>
            <person name="Weber E."/>
            <person name="Puehler A."/>
            <person name="Bonas U."/>
            <person name="Bartels D."/>
            <person name="Kaiser O."/>
        </authorList>
    </citation>
    <scope>NUCLEOTIDE SEQUENCE [LARGE SCALE GENOMIC DNA]</scope>
    <source>
        <strain>85-10</strain>
    </source>
</reference>
<sequence length="304" mass="32389">MTTLRIATRKSPLALWQSEHVAAALRQHHPGLEVVLVPMSTRGDEMLDRSLAAIGGKGLFLKELELAMLRGEADCAVHSLKDVPMELDAPFVLPAILERGDPADALVSNLYASLQALPLGARVGTSSLRRQAQLRAARPDLELIDLRGNVNTRLAKLDNGGYDAIVLACAGLQRLGLEARISARLDAPEWLPAPAQGAVAVECRGDDARIYSLLAVLDAGRTRACVEAERAMNRALHGSCHVPVAAFARWEGQGLFLQGMVGSASDGRLIHADAHGSAEDTEALGRRVAQGLFDKGAAQLLAEL</sequence>
<dbReference type="EC" id="2.5.1.61" evidence="1"/>
<dbReference type="EMBL" id="AM039952">
    <property type="protein sequence ID" value="CAJ22310.1"/>
    <property type="molecule type" value="Genomic_DNA"/>
</dbReference>
<dbReference type="RefSeq" id="WP_011346303.1">
    <property type="nucleotide sequence ID" value="NZ_CP017190.1"/>
</dbReference>
<dbReference type="SMR" id="Q3BXV3"/>
<dbReference type="STRING" id="456327.BJD11_19440"/>
<dbReference type="KEGG" id="xcv:XCV0679"/>
<dbReference type="eggNOG" id="COG0181">
    <property type="taxonomic scope" value="Bacteria"/>
</dbReference>
<dbReference type="HOGENOM" id="CLU_019704_0_2_6"/>
<dbReference type="UniPathway" id="UPA00251">
    <property type="reaction ID" value="UER00319"/>
</dbReference>
<dbReference type="Proteomes" id="UP000007069">
    <property type="component" value="Chromosome"/>
</dbReference>
<dbReference type="GO" id="GO:0005737">
    <property type="term" value="C:cytoplasm"/>
    <property type="evidence" value="ECO:0007669"/>
    <property type="project" value="TreeGrafter"/>
</dbReference>
<dbReference type="GO" id="GO:0004418">
    <property type="term" value="F:hydroxymethylbilane synthase activity"/>
    <property type="evidence" value="ECO:0007669"/>
    <property type="project" value="UniProtKB-UniRule"/>
</dbReference>
<dbReference type="GO" id="GO:0006782">
    <property type="term" value="P:protoporphyrinogen IX biosynthetic process"/>
    <property type="evidence" value="ECO:0007669"/>
    <property type="project" value="UniProtKB-UniRule"/>
</dbReference>
<dbReference type="CDD" id="cd13646">
    <property type="entry name" value="PBP2_EcHMBS_like"/>
    <property type="match status" value="1"/>
</dbReference>
<dbReference type="FunFam" id="3.40.190.10:FF:000004">
    <property type="entry name" value="Porphobilinogen deaminase"/>
    <property type="match status" value="1"/>
</dbReference>
<dbReference type="FunFam" id="3.40.190.10:FF:000005">
    <property type="entry name" value="Porphobilinogen deaminase"/>
    <property type="match status" value="1"/>
</dbReference>
<dbReference type="Gene3D" id="3.40.190.10">
    <property type="entry name" value="Periplasmic binding protein-like II"/>
    <property type="match status" value="2"/>
</dbReference>
<dbReference type="Gene3D" id="3.30.160.40">
    <property type="entry name" value="Porphobilinogen deaminase, C-terminal domain"/>
    <property type="match status" value="1"/>
</dbReference>
<dbReference type="HAMAP" id="MF_00260">
    <property type="entry name" value="Porphobil_deam"/>
    <property type="match status" value="1"/>
</dbReference>
<dbReference type="InterPro" id="IPR000860">
    <property type="entry name" value="HemC"/>
</dbReference>
<dbReference type="InterPro" id="IPR022419">
    <property type="entry name" value="Porphobilin_deaminase_cofac_BS"/>
</dbReference>
<dbReference type="InterPro" id="IPR022417">
    <property type="entry name" value="Porphobilin_deaminase_N"/>
</dbReference>
<dbReference type="InterPro" id="IPR022418">
    <property type="entry name" value="Porphobilinogen_deaminase_C"/>
</dbReference>
<dbReference type="InterPro" id="IPR036803">
    <property type="entry name" value="Porphobilinogen_deaminase_C_sf"/>
</dbReference>
<dbReference type="NCBIfam" id="TIGR00212">
    <property type="entry name" value="hemC"/>
    <property type="match status" value="1"/>
</dbReference>
<dbReference type="PANTHER" id="PTHR11557">
    <property type="entry name" value="PORPHOBILINOGEN DEAMINASE"/>
    <property type="match status" value="1"/>
</dbReference>
<dbReference type="PANTHER" id="PTHR11557:SF0">
    <property type="entry name" value="PORPHOBILINOGEN DEAMINASE"/>
    <property type="match status" value="1"/>
</dbReference>
<dbReference type="Pfam" id="PF01379">
    <property type="entry name" value="Porphobil_deam"/>
    <property type="match status" value="1"/>
</dbReference>
<dbReference type="Pfam" id="PF03900">
    <property type="entry name" value="Porphobil_deamC"/>
    <property type="match status" value="1"/>
</dbReference>
<dbReference type="PIRSF" id="PIRSF001438">
    <property type="entry name" value="4pyrrol_synth_OHMeBilane_synth"/>
    <property type="match status" value="1"/>
</dbReference>
<dbReference type="PRINTS" id="PR00151">
    <property type="entry name" value="PORPHBDMNASE"/>
</dbReference>
<dbReference type="SUPFAM" id="SSF53850">
    <property type="entry name" value="Periplasmic binding protein-like II"/>
    <property type="match status" value="1"/>
</dbReference>
<dbReference type="SUPFAM" id="SSF54782">
    <property type="entry name" value="Porphobilinogen deaminase (hydroxymethylbilane synthase), C-terminal domain"/>
    <property type="match status" value="1"/>
</dbReference>
<dbReference type="PROSITE" id="PS00533">
    <property type="entry name" value="PORPHOBILINOGEN_DEAM"/>
    <property type="match status" value="1"/>
</dbReference>
<keyword id="KW-0627">Porphyrin biosynthesis</keyword>
<keyword id="KW-0808">Transferase</keyword>
<evidence type="ECO:0000255" key="1">
    <source>
        <dbReference type="HAMAP-Rule" id="MF_00260"/>
    </source>
</evidence>
<comment type="function">
    <text evidence="1">Tetrapolymerization of the monopyrrole PBG into the hydroxymethylbilane pre-uroporphyrinogen in several discrete steps.</text>
</comment>
<comment type="catalytic activity">
    <reaction evidence="1">
        <text>4 porphobilinogen + H2O = hydroxymethylbilane + 4 NH4(+)</text>
        <dbReference type="Rhea" id="RHEA:13185"/>
        <dbReference type="ChEBI" id="CHEBI:15377"/>
        <dbReference type="ChEBI" id="CHEBI:28938"/>
        <dbReference type="ChEBI" id="CHEBI:57845"/>
        <dbReference type="ChEBI" id="CHEBI:58126"/>
        <dbReference type="EC" id="2.5.1.61"/>
    </reaction>
</comment>
<comment type="cofactor">
    <cofactor evidence="1">
        <name>dipyrromethane</name>
        <dbReference type="ChEBI" id="CHEBI:60342"/>
    </cofactor>
    <text evidence="1">Binds 1 dipyrromethane group covalently.</text>
</comment>
<comment type="pathway">
    <text evidence="1">Porphyrin-containing compound metabolism; protoporphyrin-IX biosynthesis; coproporphyrinogen-III from 5-aminolevulinate: step 2/4.</text>
</comment>
<comment type="subunit">
    <text evidence="1">Monomer.</text>
</comment>
<comment type="miscellaneous">
    <text evidence="1">The porphobilinogen subunits are added to the dipyrromethane group.</text>
</comment>
<comment type="similarity">
    <text evidence="1">Belongs to the HMBS family.</text>
</comment>
<organism>
    <name type="scientific">Xanthomonas euvesicatoria pv. vesicatoria (strain 85-10)</name>
    <name type="common">Xanthomonas campestris pv. vesicatoria</name>
    <dbReference type="NCBI Taxonomy" id="316273"/>
    <lineage>
        <taxon>Bacteria</taxon>
        <taxon>Pseudomonadati</taxon>
        <taxon>Pseudomonadota</taxon>
        <taxon>Gammaproteobacteria</taxon>
        <taxon>Lysobacterales</taxon>
        <taxon>Lysobacteraceae</taxon>
        <taxon>Xanthomonas</taxon>
    </lineage>
</organism>
<proteinExistence type="inferred from homology"/>
<protein>
    <recommendedName>
        <fullName evidence="1">Porphobilinogen deaminase</fullName>
        <shortName evidence="1">PBG</shortName>
        <ecNumber evidence="1">2.5.1.61</ecNumber>
    </recommendedName>
    <alternativeName>
        <fullName evidence="1">Hydroxymethylbilane synthase</fullName>
        <shortName evidence="1">HMBS</shortName>
    </alternativeName>
    <alternativeName>
        <fullName evidence="1">Pre-uroporphyrinogen synthase</fullName>
    </alternativeName>
</protein>
<gene>
    <name evidence="1" type="primary">hemC</name>
    <name type="ordered locus">XCV0679</name>
</gene>
<feature type="chain" id="PRO_0000304293" description="Porphobilinogen deaminase">
    <location>
        <begin position="1"/>
        <end position="304"/>
    </location>
</feature>
<feature type="modified residue" description="S-(dipyrrolylmethanemethyl)cysteine" evidence="1">
    <location>
        <position position="240"/>
    </location>
</feature>
<name>HEM3_XANE5</name>